<accession>Q493I2</accession>
<reference key="1">
    <citation type="journal article" date="2005" name="Genome Res.">
        <title>Genome sequence of Blochmannia pennsylvanicus indicates parallel evolutionary trends among bacterial mutualists of insects.</title>
        <authorList>
            <person name="Degnan P.H."/>
            <person name="Lazarus A.B."/>
            <person name="Wernegreen J.J."/>
        </authorList>
    </citation>
    <scope>NUCLEOTIDE SEQUENCE [LARGE SCALE GENOMIC DNA]</scope>
    <source>
        <strain>BPEN</strain>
    </source>
</reference>
<sequence length="322" mass="36148">MVHSKSLRIAFFGTTSFAAWHLHTLAHLSTHQIIAVFTQEIQISTCKSFLSLHKIAKKYNISLFQSRTLSISDIIYIIKKINVDLIVVVSYGLILPQEILNIPRLGCINVHGSLLPRWRGPAPIQRALEYGDSITGITIIQMDLGIDTGDILHIMPCKIFPKDTSCTLSNRLVNIGSAMLSQVLDQFILGTFTLIPQDSTYATYAHKLNKQEARINWNLSAIQLERCIRAFNPWPISFFQIKNDRIRVWDAEVSNQNINNYSSSTSILPGTILAAHPNGIYVVTGSGILILTMLQISGKKITSVRDLLNAYKEWFKPNSVLE</sequence>
<keyword id="KW-0648">Protein biosynthesis</keyword>
<keyword id="KW-1185">Reference proteome</keyword>
<keyword id="KW-0808">Transferase</keyword>
<gene>
    <name evidence="1" type="primary">fmt</name>
    <name type="ordered locus">BPEN_225</name>
</gene>
<comment type="function">
    <text evidence="1">Attaches a formyl group to the free amino group of methionyl-tRNA(fMet). The formyl group appears to play a dual role in the initiator identity of N-formylmethionyl-tRNA by promoting its recognition by IF2 and preventing the misappropriation of this tRNA by the elongation apparatus.</text>
</comment>
<comment type="catalytic activity">
    <reaction evidence="1">
        <text>L-methionyl-tRNA(fMet) + (6R)-10-formyltetrahydrofolate = N-formyl-L-methionyl-tRNA(fMet) + (6S)-5,6,7,8-tetrahydrofolate + H(+)</text>
        <dbReference type="Rhea" id="RHEA:24380"/>
        <dbReference type="Rhea" id="RHEA-COMP:9952"/>
        <dbReference type="Rhea" id="RHEA-COMP:9953"/>
        <dbReference type="ChEBI" id="CHEBI:15378"/>
        <dbReference type="ChEBI" id="CHEBI:57453"/>
        <dbReference type="ChEBI" id="CHEBI:78530"/>
        <dbReference type="ChEBI" id="CHEBI:78844"/>
        <dbReference type="ChEBI" id="CHEBI:195366"/>
        <dbReference type="EC" id="2.1.2.9"/>
    </reaction>
</comment>
<comment type="similarity">
    <text evidence="1">Belongs to the Fmt family.</text>
</comment>
<feature type="chain" id="PRO_1000020023" description="Methionyl-tRNA formyltransferase">
    <location>
        <begin position="1"/>
        <end position="322"/>
    </location>
</feature>
<feature type="binding site" evidence="1">
    <location>
        <begin position="113"/>
        <end position="116"/>
    </location>
    <ligand>
        <name>(6S)-5,6,7,8-tetrahydrofolate</name>
        <dbReference type="ChEBI" id="CHEBI:57453"/>
    </ligand>
</feature>
<name>FMT_BLOPB</name>
<evidence type="ECO:0000255" key="1">
    <source>
        <dbReference type="HAMAP-Rule" id="MF_00182"/>
    </source>
</evidence>
<dbReference type="EC" id="2.1.2.9" evidence="1"/>
<dbReference type="EMBL" id="CP000016">
    <property type="protein sequence ID" value="AAZ40858.1"/>
    <property type="molecule type" value="Genomic_DNA"/>
</dbReference>
<dbReference type="RefSeq" id="WP_011282765.1">
    <property type="nucleotide sequence ID" value="NC_007292.1"/>
</dbReference>
<dbReference type="SMR" id="Q493I2"/>
<dbReference type="STRING" id="291272.BPEN_225"/>
<dbReference type="KEGG" id="bpn:BPEN_225"/>
<dbReference type="eggNOG" id="COG0223">
    <property type="taxonomic scope" value="Bacteria"/>
</dbReference>
<dbReference type="HOGENOM" id="CLU_033347_1_2_6"/>
<dbReference type="OrthoDB" id="9802815at2"/>
<dbReference type="Proteomes" id="UP000007794">
    <property type="component" value="Chromosome"/>
</dbReference>
<dbReference type="GO" id="GO:0005829">
    <property type="term" value="C:cytosol"/>
    <property type="evidence" value="ECO:0007669"/>
    <property type="project" value="TreeGrafter"/>
</dbReference>
<dbReference type="GO" id="GO:0004479">
    <property type="term" value="F:methionyl-tRNA formyltransferase activity"/>
    <property type="evidence" value="ECO:0007669"/>
    <property type="project" value="UniProtKB-UniRule"/>
</dbReference>
<dbReference type="CDD" id="cd08646">
    <property type="entry name" value="FMT_core_Met-tRNA-FMT_N"/>
    <property type="match status" value="1"/>
</dbReference>
<dbReference type="CDD" id="cd08704">
    <property type="entry name" value="Met_tRNA_FMT_C"/>
    <property type="match status" value="1"/>
</dbReference>
<dbReference type="Gene3D" id="3.10.25.10">
    <property type="entry name" value="Formyl transferase, C-terminal domain"/>
    <property type="match status" value="1"/>
</dbReference>
<dbReference type="Gene3D" id="3.40.50.170">
    <property type="entry name" value="Formyl transferase, N-terminal domain"/>
    <property type="match status" value="1"/>
</dbReference>
<dbReference type="HAMAP" id="MF_00182">
    <property type="entry name" value="Formyl_trans"/>
    <property type="match status" value="1"/>
</dbReference>
<dbReference type="InterPro" id="IPR005794">
    <property type="entry name" value="Fmt"/>
</dbReference>
<dbReference type="InterPro" id="IPR005793">
    <property type="entry name" value="Formyl_trans_C"/>
</dbReference>
<dbReference type="InterPro" id="IPR037022">
    <property type="entry name" value="Formyl_trans_C_sf"/>
</dbReference>
<dbReference type="InterPro" id="IPR002376">
    <property type="entry name" value="Formyl_transf_N"/>
</dbReference>
<dbReference type="InterPro" id="IPR036477">
    <property type="entry name" value="Formyl_transf_N_sf"/>
</dbReference>
<dbReference type="InterPro" id="IPR011034">
    <property type="entry name" value="Formyl_transferase-like_C_sf"/>
</dbReference>
<dbReference type="InterPro" id="IPR044135">
    <property type="entry name" value="Met-tRNA-FMT_C"/>
</dbReference>
<dbReference type="InterPro" id="IPR041711">
    <property type="entry name" value="Met-tRNA-FMT_N"/>
</dbReference>
<dbReference type="NCBIfam" id="TIGR00460">
    <property type="entry name" value="fmt"/>
    <property type="match status" value="1"/>
</dbReference>
<dbReference type="PANTHER" id="PTHR11138">
    <property type="entry name" value="METHIONYL-TRNA FORMYLTRANSFERASE"/>
    <property type="match status" value="1"/>
</dbReference>
<dbReference type="PANTHER" id="PTHR11138:SF5">
    <property type="entry name" value="METHIONYL-TRNA FORMYLTRANSFERASE, MITOCHONDRIAL"/>
    <property type="match status" value="1"/>
</dbReference>
<dbReference type="Pfam" id="PF02911">
    <property type="entry name" value="Formyl_trans_C"/>
    <property type="match status" value="1"/>
</dbReference>
<dbReference type="Pfam" id="PF00551">
    <property type="entry name" value="Formyl_trans_N"/>
    <property type="match status" value="1"/>
</dbReference>
<dbReference type="SUPFAM" id="SSF50486">
    <property type="entry name" value="FMT C-terminal domain-like"/>
    <property type="match status" value="1"/>
</dbReference>
<dbReference type="SUPFAM" id="SSF53328">
    <property type="entry name" value="Formyltransferase"/>
    <property type="match status" value="1"/>
</dbReference>
<organism>
    <name type="scientific">Blochmanniella pennsylvanica (strain BPEN)</name>
    <dbReference type="NCBI Taxonomy" id="291272"/>
    <lineage>
        <taxon>Bacteria</taxon>
        <taxon>Pseudomonadati</taxon>
        <taxon>Pseudomonadota</taxon>
        <taxon>Gammaproteobacteria</taxon>
        <taxon>Enterobacterales</taxon>
        <taxon>Enterobacteriaceae</taxon>
        <taxon>ant endosymbionts</taxon>
        <taxon>Candidatus Blochmanniella</taxon>
    </lineage>
</organism>
<protein>
    <recommendedName>
        <fullName evidence="1">Methionyl-tRNA formyltransferase</fullName>
        <ecNumber evidence="1">2.1.2.9</ecNumber>
    </recommendedName>
</protein>
<proteinExistence type="inferred from homology"/>